<dbReference type="EC" id="6.3.4.4" evidence="1"/>
<dbReference type="EMBL" id="AE003849">
    <property type="protein sequence ID" value="AAF83265.1"/>
    <property type="status" value="ALT_INIT"/>
    <property type="molecule type" value="Genomic_DNA"/>
</dbReference>
<dbReference type="PIR" id="B82803">
    <property type="entry name" value="B82803"/>
</dbReference>
<dbReference type="RefSeq" id="WP_031336291.1">
    <property type="nucleotide sequence ID" value="NC_002488.3"/>
</dbReference>
<dbReference type="SMR" id="Q9PG47"/>
<dbReference type="STRING" id="160492.XF_0455"/>
<dbReference type="KEGG" id="xfa:XF_0455"/>
<dbReference type="eggNOG" id="COG0104">
    <property type="taxonomic scope" value="Bacteria"/>
</dbReference>
<dbReference type="HOGENOM" id="CLU_029848_0_0_6"/>
<dbReference type="UniPathway" id="UPA00075">
    <property type="reaction ID" value="UER00335"/>
</dbReference>
<dbReference type="Proteomes" id="UP000000812">
    <property type="component" value="Chromosome"/>
</dbReference>
<dbReference type="GO" id="GO:0005737">
    <property type="term" value="C:cytoplasm"/>
    <property type="evidence" value="ECO:0007669"/>
    <property type="project" value="UniProtKB-SubCell"/>
</dbReference>
<dbReference type="GO" id="GO:0004019">
    <property type="term" value="F:adenylosuccinate synthase activity"/>
    <property type="evidence" value="ECO:0007669"/>
    <property type="project" value="UniProtKB-UniRule"/>
</dbReference>
<dbReference type="GO" id="GO:0005525">
    <property type="term" value="F:GTP binding"/>
    <property type="evidence" value="ECO:0007669"/>
    <property type="project" value="UniProtKB-UniRule"/>
</dbReference>
<dbReference type="GO" id="GO:0000287">
    <property type="term" value="F:magnesium ion binding"/>
    <property type="evidence" value="ECO:0007669"/>
    <property type="project" value="UniProtKB-UniRule"/>
</dbReference>
<dbReference type="GO" id="GO:0044208">
    <property type="term" value="P:'de novo' AMP biosynthetic process"/>
    <property type="evidence" value="ECO:0007669"/>
    <property type="project" value="UniProtKB-UniRule"/>
</dbReference>
<dbReference type="GO" id="GO:0046040">
    <property type="term" value="P:IMP metabolic process"/>
    <property type="evidence" value="ECO:0007669"/>
    <property type="project" value="TreeGrafter"/>
</dbReference>
<dbReference type="CDD" id="cd03108">
    <property type="entry name" value="AdSS"/>
    <property type="match status" value="1"/>
</dbReference>
<dbReference type="FunFam" id="1.10.300.10:FF:000001">
    <property type="entry name" value="Adenylosuccinate synthetase"/>
    <property type="match status" value="1"/>
</dbReference>
<dbReference type="FunFam" id="3.90.170.10:FF:000001">
    <property type="entry name" value="Adenylosuccinate synthetase"/>
    <property type="match status" value="1"/>
</dbReference>
<dbReference type="Gene3D" id="3.40.440.10">
    <property type="entry name" value="Adenylosuccinate Synthetase, subunit A, domain 1"/>
    <property type="match status" value="1"/>
</dbReference>
<dbReference type="Gene3D" id="1.10.300.10">
    <property type="entry name" value="Adenylosuccinate Synthetase, subunit A, domain 2"/>
    <property type="match status" value="1"/>
</dbReference>
<dbReference type="Gene3D" id="3.90.170.10">
    <property type="entry name" value="Adenylosuccinate Synthetase, subunit A, domain 3"/>
    <property type="match status" value="1"/>
</dbReference>
<dbReference type="HAMAP" id="MF_00011">
    <property type="entry name" value="Adenylosucc_synth"/>
    <property type="match status" value="1"/>
</dbReference>
<dbReference type="InterPro" id="IPR018220">
    <property type="entry name" value="Adenylosuccin_syn_GTP-bd"/>
</dbReference>
<dbReference type="InterPro" id="IPR033128">
    <property type="entry name" value="Adenylosuccin_syn_Lys_AS"/>
</dbReference>
<dbReference type="InterPro" id="IPR042109">
    <property type="entry name" value="Adenylosuccinate_synth_dom1"/>
</dbReference>
<dbReference type="InterPro" id="IPR042110">
    <property type="entry name" value="Adenylosuccinate_synth_dom2"/>
</dbReference>
<dbReference type="InterPro" id="IPR042111">
    <property type="entry name" value="Adenylosuccinate_synth_dom3"/>
</dbReference>
<dbReference type="InterPro" id="IPR001114">
    <property type="entry name" value="Adenylosuccinate_synthetase"/>
</dbReference>
<dbReference type="InterPro" id="IPR027417">
    <property type="entry name" value="P-loop_NTPase"/>
</dbReference>
<dbReference type="NCBIfam" id="NF002223">
    <property type="entry name" value="PRK01117.1"/>
    <property type="match status" value="1"/>
</dbReference>
<dbReference type="NCBIfam" id="TIGR00184">
    <property type="entry name" value="purA"/>
    <property type="match status" value="1"/>
</dbReference>
<dbReference type="PANTHER" id="PTHR11846">
    <property type="entry name" value="ADENYLOSUCCINATE SYNTHETASE"/>
    <property type="match status" value="1"/>
</dbReference>
<dbReference type="PANTHER" id="PTHR11846:SF0">
    <property type="entry name" value="ADENYLOSUCCINATE SYNTHETASE"/>
    <property type="match status" value="1"/>
</dbReference>
<dbReference type="Pfam" id="PF00709">
    <property type="entry name" value="Adenylsucc_synt"/>
    <property type="match status" value="1"/>
</dbReference>
<dbReference type="SMART" id="SM00788">
    <property type="entry name" value="Adenylsucc_synt"/>
    <property type="match status" value="1"/>
</dbReference>
<dbReference type="SUPFAM" id="SSF52540">
    <property type="entry name" value="P-loop containing nucleoside triphosphate hydrolases"/>
    <property type="match status" value="1"/>
</dbReference>
<dbReference type="PROSITE" id="PS01266">
    <property type="entry name" value="ADENYLOSUCCIN_SYN_1"/>
    <property type="match status" value="1"/>
</dbReference>
<dbReference type="PROSITE" id="PS00513">
    <property type="entry name" value="ADENYLOSUCCIN_SYN_2"/>
    <property type="match status" value="1"/>
</dbReference>
<keyword id="KW-0963">Cytoplasm</keyword>
<keyword id="KW-0342">GTP-binding</keyword>
<keyword id="KW-0436">Ligase</keyword>
<keyword id="KW-0460">Magnesium</keyword>
<keyword id="KW-0479">Metal-binding</keyword>
<keyword id="KW-0547">Nucleotide-binding</keyword>
<keyword id="KW-0658">Purine biosynthesis</keyword>
<organism>
    <name type="scientific">Xylella fastidiosa (strain 9a5c)</name>
    <dbReference type="NCBI Taxonomy" id="160492"/>
    <lineage>
        <taxon>Bacteria</taxon>
        <taxon>Pseudomonadati</taxon>
        <taxon>Pseudomonadota</taxon>
        <taxon>Gammaproteobacteria</taxon>
        <taxon>Lysobacterales</taxon>
        <taxon>Lysobacteraceae</taxon>
        <taxon>Xylella</taxon>
    </lineage>
</organism>
<name>PURA_XYLFA</name>
<accession>Q9PG47</accession>
<evidence type="ECO:0000255" key="1">
    <source>
        <dbReference type="HAMAP-Rule" id="MF_00011"/>
    </source>
</evidence>
<evidence type="ECO:0000305" key="2"/>
<reference key="1">
    <citation type="journal article" date="2000" name="Nature">
        <title>The genome sequence of the plant pathogen Xylella fastidiosa.</title>
        <authorList>
            <person name="Simpson A.J.G."/>
            <person name="Reinach F.C."/>
            <person name="Arruda P."/>
            <person name="Abreu F.A."/>
            <person name="Acencio M."/>
            <person name="Alvarenga R."/>
            <person name="Alves L.M.C."/>
            <person name="Araya J.E."/>
            <person name="Baia G.S."/>
            <person name="Baptista C.S."/>
            <person name="Barros M.H."/>
            <person name="Bonaccorsi E.D."/>
            <person name="Bordin S."/>
            <person name="Bove J.M."/>
            <person name="Briones M.R.S."/>
            <person name="Bueno M.R.P."/>
            <person name="Camargo A.A."/>
            <person name="Camargo L.E.A."/>
            <person name="Carraro D.M."/>
            <person name="Carrer H."/>
            <person name="Colauto N.B."/>
            <person name="Colombo C."/>
            <person name="Costa F.F."/>
            <person name="Costa M.C.R."/>
            <person name="Costa-Neto C.M."/>
            <person name="Coutinho L.L."/>
            <person name="Cristofani M."/>
            <person name="Dias-Neto E."/>
            <person name="Docena C."/>
            <person name="El-Dorry H."/>
            <person name="Facincani A.P."/>
            <person name="Ferreira A.J.S."/>
            <person name="Ferreira V.C.A."/>
            <person name="Ferro J.A."/>
            <person name="Fraga J.S."/>
            <person name="Franca S.C."/>
            <person name="Franco M.C."/>
            <person name="Frohme M."/>
            <person name="Furlan L.R."/>
            <person name="Garnier M."/>
            <person name="Goldman G.H."/>
            <person name="Goldman M.H.S."/>
            <person name="Gomes S.L."/>
            <person name="Gruber A."/>
            <person name="Ho P.L."/>
            <person name="Hoheisel J.D."/>
            <person name="Junqueira M.L."/>
            <person name="Kemper E.L."/>
            <person name="Kitajima J.P."/>
            <person name="Krieger J.E."/>
            <person name="Kuramae E.E."/>
            <person name="Laigret F."/>
            <person name="Lambais M.R."/>
            <person name="Leite L.C.C."/>
            <person name="Lemos E.G.M."/>
            <person name="Lemos M.V.F."/>
            <person name="Lopes S.A."/>
            <person name="Lopes C.R."/>
            <person name="Machado J.A."/>
            <person name="Machado M.A."/>
            <person name="Madeira A.M.B.N."/>
            <person name="Madeira H.M.F."/>
            <person name="Marino C.L."/>
            <person name="Marques M.V."/>
            <person name="Martins E.A.L."/>
            <person name="Martins E.M.F."/>
            <person name="Matsukuma A.Y."/>
            <person name="Menck C.F.M."/>
            <person name="Miracca E.C."/>
            <person name="Miyaki C.Y."/>
            <person name="Monteiro-Vitorello C.B."/>
            <person name="Moon D.H."/>
            <person name="Nagai M.A."/>
            <person name="Nascimento A.L.T.O."/>
            <person name="Netto L.E.S."/>
            <person name="Nhani A. Jr."/>
            <person name="Nobrega F.G."/>
            <person name="Nunes L.R."/>
            <person name="Oliveira M.A."/>
            <person name="de Oliveira M.C."/>
            <person name="de Oliveira R.C."/>
            <person name="Palmieri D.A."/>
            <person name="Paris A."/>
            <person name="Peixoto B.R."/>
            <person name="Pereira G.A.G."/>
            <person name="Pereira H.A. Jr."/>
            <person name="Pesquero J.B."/>
            <person name="Quaggio R.B."/>
            <person name="Roberto P.G."/>
            <person name="Rodrigues V."/>
            <person name="de Rosa A.J.M."/>
            <person name="de Rosa V.E. Jr."/>
            <person name="de Sa R.G."/>
            <person name="Santelli R.V."/>
            <person name="Sawasaki H.E."/>
            <person name="da Silva A.C.R."/>
            <person name="da Silva A.M."/>
            <person name="da Silva F.R."/>
            <person name="Silva W.A. Jr."/>
            <person name="da Silveira J.F."/>
            <person name="Silvestri M.L.Z."/>
            <person name="Siqueira W.J."/>
            <person name="de Souza A.A."/>
            <person name="de Souza A.P."/>
            <person name="Terenzi M.F."/>
            <person name="Truffi D."/>
            <person name="Tsai S.M."/>
            <person name="Tsuhako M.H."/>
            <person name="Vallada H."/>
            <person name="Van Sluys M.A."/>
            <person name="Verjovski-Almeida S."/>
            <person name="Vettore A.L."/>
            <person name="Zago M.A."/>
            <person name="Zatz M."/>
            <person name="Meidanis J."/>
            <person name="Setubal J.C."/>
        </authorList>
    </citation>
    <scope>NUCLEOTIDE SEQUENCE [LARGE SCALE GENOMIC DNA]</scope>
    <source>
        <strain>9a5c</strain>
    </source>
</reference>
<comment type="function">
    <text evidence="1">Plays an important role in the de novo pathway of purine nucleotide biosynthesis. Catalyzes the first committed step in the biosynthesis of AMP from IMP.</text>
</comment>
<comment type="catalytic activity">
    <reaction evidence="1">
        <text>IMP + L-aspartate + GTP = N(6)-(1,2-dicarboxyethyl)-AMP + GDP + phosphate + 2 H(+)</text>
        <dbReference type="Rhea" id="RHEA:15753"/>
        <dbReference type="ChEBI" id="CHEBI:15378"/>
        <dbReference type="ChEBI" id="CHEBI:29991"/>
        <dbReference type="ChEBI" id="CHEBI:37565"/>
        <dbReference type="ChEBI" id="CHEBI:43474"/>
        <dbReference type="ChEBI" id="CHEBI:57567"/>
        <dbReference type="ChEBI" id="CHEBI:58053"/>
        <dbReference type="ChEBI" id="CHEBI:58189"/>
        <dbReference type="EC" id="6.3.4.4"/>
    </reaction>
</comment>
<comment type="cofactor">
    <cofactor evidence="1">
        <name>Mg(2+)</name>
        <dbReference type="ChEBI" id="CHEBI:18420"/>
    </cofactor>
    <text evidence="1">Binds 1 Mg(2+) ion per subunit.</text>
</comment>
<comment type="pathway">
    <text evidence="1">Purine metabolism; AMP biosynthesis via de novo pathway; AMP from IMP: step 1/2.</text>
</comment>
<comment type="subunit">
    <text evidence="1">Homodimer.</text>
</comment>
<comment type="subcellular location">
    <subcellularLocation>
        <location evidence="1">Cytoplasm</location>
    </subcellularLocation>
</comment>
<comment type="similarity">
    <text evidence="1">Belongs to the adenylosuccinate synthetase family.</text>
</comment>
<comment type="sequence caution" evidence="2">
    <conflict type="erroneous initiation">
        <sequence resource="EMBL-CDS" id="AAF83265"/>
    </conflict>
</comment>
<feature type="chain" id="PRO_0000095264" description="Adenylosuccinate synthetase">
    <location>
        <begin position="1"/>
        <end position="430"/>
    </location>
</feature>
<feature type="active site" description="Proton acceptor" evidence="1">
    <location>
        <position position="14"/>
    </location>
</feature>
<feature type="active site" description="Proton donor" evidence="1">
    <location>
        <position position="42"/>
    </location>
</feature>
<feature type="binding site" evidence="1">
    <location>
        <begin position="13"/>
        <end position="19"/>
    </location>
    <ligand>
        <name>GTP</name>
        <dbReference type="ChEBI" id="CHEBI:37565"/>
    </ligand>
</feature>
<feature type="binding site" description="in other chain" evidence="1">
    <location>
        <begin position="14"/>
        <end position="17"/>
    </location>
    <ligand>
        <name>IMP</name>
        <dbReference type="ChEBI" id="CHEBI:58053"/>
        <note>ligand shared between dimeric partners</note>
    </ligand>
</feature>
<feature type="binding site" evidence="1">
    <location>
        <position position="14"/>
    </location>
    <ligand>
        <name>Mg(2+)</name>
        <dbReference type="ChEBI" id="CHEBI:18420"/>
    </ligand>
</feature>
<feature type="binding site" description="in other chain" evidence="1">
    <location>
        <begin position="39"/>
        <end position="42"/>
    </location>
    <ligand>
        <name>IMP</name>
        <dbReference type="ChEBI" id="CHEBI:58053"/>
        <note>ligand shared between dimeric partners</note>
    </ligand>
</feature>
<feature type="binding site" evidence="1">
    <location>
        <begin position="41"/>
        <end position="43"/>
    </location>
    <ligand>
        <name>GTP</name>
        <dbReference type="ChEBI" id="CHEBI:37565"/>
    </ligand>
</feature>
<feature type="binding site" evidence="1">
    <location>
        <position position="41"/>
    </location>
    <ligand>
        <name>Mg(2+)</name>
        <dbReference type="ChEBI" id="CHEBI:18420"/>
    </ligand>
</feature>
<feature type="binding site" description="in other chain" evidence="1">
    <location>
        <position position="130"/>
    </location>
    <ligand>
        <name>IMP</name>
        <dbReference type="ChEBI" id="CHEBI:58053"/>
        <note>ligand shared between dimeric partners</note>
    </ligand>
</feature>
<feature type="binding site" evidence="1">
    <location>
        <position position="144"/>
    </location>
    <ligand>
        <name>IMP</name>
        <dbReference type="ChEBI" id="CHEBI:58053"/>
        <note>ligand shared between dimeric partners</note>
    </ligand>
</feature>
<feature type="binding site" description="in other chain" evidence="1">
    <location>
        <position position="225"/>
    </location>
    <ligand>
        <name>IMP</name>
        <dbReference type="ChEBI" id="CHEBI:58053"/>
        <note>ligand shared between dimeric partners</note>
    </ligand>
</feature>
<feature type="binding site" description="in other chain" evidence="1">
    <location>
        <position position="240"/>
    </location>
    <ligand>
        <name>IMP</name>
        <dbReference type="ChEBI" id="CHEBI:58053"/>
        <note>ligand shared between dimeric partners</note>
    </ligand>
</feature>
<feature type="binding site" evidence="1">
    <location>
        <begin position="300"/>
        <end position="306"/>
    </location>
    <ligand>
        <name>substrate</name>
    </ligand>
</feature>
<feature type="binding site" description="in other chain" evidence="1">
    <location>
        <position position="304"/>
    </location>
    <ligand>
        <name>IMP</name>
        <dbReference type="ChEBI" id="CHEBI:58053"/>
        <note>ligand shared between dimeric partners</note>
    </ligand>
</feature>
<feature type="binding site" evidence="1">
    <location>
        <position position="306"/>
    </location>
    <ligand>
        <name>GTP</name>
        <dbReference type="ChEBI" id="CHEBI:37565"/>
    </ligand>
</feature>
<feature type="binding site" evidence="1">
    <location>
        <begin position="332"/>
        <end position="334"/>
    </location>
    <ligand>
        <name>GTP</name>
        <dbReference type="ChEBI" id="CHEBI:37565"/>
    </ligand>
</feature>
<feature type="binding site" evidence="1">
    <location>
        <begin position="414"/>
        <end position="416"/>
    </location>
    <ligand>
        <name>GTP</name>
        <dbReference type="ChEBI" id="CHEBI:37565"/>
    </ligand>
</feature>
<proteinExistence type="inferred from homology"/>
<protein>
    <recommendedName>
        <fullName evidence="1">Adenylosuccinate synthetase</fullName>
        <shortName evidence="1">AMPSase</shortName>
        <shortName evidence="1">AdSS</shortName>
        <ecNumber evidence="1">6.3.4.4</ecNumber>
    </recommendedName>
    <alternativeName>
        <fullName evidence="1">IMP--aspartate ligase</fullName>
    </alternativeName>
</protein>
<gene>
    <name evidence="1" type="primary">purA</name>
    <name type="ordered locus">XF_0455</name>
</gene>
<sequence length="430" mass="46671">MGQSVVVLGAQWGDEGKGKIVDLLTEEIGAVVRFQGGHNAGHTLVINGKKTVLHLIPSGILRNGVLCLIGNGVVISPAALRKEIEELEDTGLEIRSRLKISPAAPLIMEYHIALDQAREKAAGGRAIGTTGRGIGPAYEDKVGRRGIRVADLHYPDQLAEKLRDALDYHNFVLTRYFGVDGMDFQRIYDEMLVFAEYVEPMKSDVAGILHDLRKQGKRVLFEGAQGTLLDIDHGTYPYVTSSSTTVGGALSGAGVGVQDIDYVLGIAKAYATRVGGGPFPTELDDEIGQGIRDRGVEYGASTGRPRRCGWMDIVALKRAVAINGITGLCITKLDVLDGMDKLKICIAYEYHDKRSEYAPLDAQGWEECTPVYLEFPGWNESTHGITSWEKLPPAARAYLCALEELAGCPIGIVSTGPDREHTIMLHDPFA</sequence>